<proteinExistence type="inferred from homology"/>
<accession>Q4JBN3</accession>
<reference key="1">
    <citation type="journal article" date="2005" name="J. Bacteriol.">
        <title>The genome of Sulfolobus acidocaldarius, a model organism of the Crenarchaeota.</title>
        <authorList>
            <person name="Chen L."/>
            <person name="Bruegger K."/>
            <person name="Skovgaard M."/>
            <person name="Redder P."/>
            <person name="She Q."/>
            <person name="Torarinsson E."/>
            <person name="Greve B."/>
            <person name="Awayez M."/>
            <person name="Zibat A."/>
            <person name="Klenk H.-P."/>
            <person name="Garrett R.A."/>
        </authorList>
    </citation>
    <scope>NUCLEOTIDE SEQUENCE [LARGE SCALE GENOMIC DNA]</scope>
    <source>
        <strain>ATCC 33909 / DSM 639 / JCM 8929 / NBRC 15157 / NCIMB 11770</strain>
    </source>
</reference>
<feature type="chain" id="PRO_0000152327" description="Sugar fermentation stimulation protein homolog">
    <location>
        <begin position="1"/>
        <end position="225"/>
    </location>
</feature>
<gene>
    <name evidence="1" type="primary">sfsA</name>
    <name type="ordered locus">Saci_0380</name>
</gene>
<evidence type="ECO:0000255" key="1">
    <source>
        <dbReference type="HAMAP-Rule" id="MF_00095"/>
    </source>
</evidence>
<evidence type="ECO:0000305" key="2"/>
<dbReference type="EMBL" id="CP000077">
    <property type="protein sequence ID" value="AAY79796.1"/>
    <property type="status" value="ALT_INIT"/>
    <property type="molecule type" value="Genomic_DNA"/>
</dbReference>
<dbReference type="RefSeq" id="WP_015385406.1">
    <property type="nucleotide sequence ID" value="NC_007181.1"/>
</dbReference>
<dbReference type="SMR" id="Q4JBN3"/>
<dbReference type="STRING" id="330779.Saci_0380"/>
<dbReference type="GeneID" id="14550909"/>
<dbReference type="GeneID" id="78440730"/>
<dbReference type="KEGG" id="sai:Saci_0380"/>
<dbReference type="PATRIC" id="fig|330779.12.peg.378"/>
<dbReference type="eggNOG" id="arCOG04115">
    <property type="taxonomic scope" value="Archaea"/>
</dbReference>
<dbReference type="HOGENOM" id="CLU_052299_1_0_2"/>
<dbReference type="Proteomes" id="UP000001018">
    <property type="component" value="Chromosome"/>
</dbReference>
<dbReference type="GO" id="GO:0003677">
    <property type="term" value="F:DNA binding"/>
    <property type="evidence" value="ECO:0007669"/>
    <property type="project" value="InterPro"/>
</dbReference>
<dbReference type="CDD" id="cd22357">
    <property type="entry name" value="SfsA-like"/>
    <property type="match status" value="1"/>
</dbReference>
<dbReference type="Gene3D" id="2.40.50.580">
    <property type="match status" value="1"/>
</dbReference>
<dbReference type="Gene3D" id="3.40.1350.60">
    <property type="match status" value="1"/>
</dbReference>
<dbReference type="HAMAP" id="MF_00095">
    <property type="entry name" value="SfsA"/>
    <property type="match status" value="1"/>
</dbReference>
<dbReference type="InterPro" id="IPR005224">
    <property type="entry name" value="SfsA"/>
</dbReference>
<dbReference type="InterPro" id="IPR040452">
    <property type="entry name" value="SfsA_C"/>
</dbReference>
<dbReference type="InterPro" id="IPR041465">
    <property type="entry name" value="SfsA_N"/>
</dbReference>
<dbReference type="NCBIfam" id="TIGR00230">
    <property type="entry name" value="sfsA"/>
    <property type="match status" value="1"/>
</dbReference>
<dbReference type="PANTHER" id="PTHR30545">
    <property type="entry name" value="SUGAR FERMENTATION STIMULATION PROTEIN A"/>
    <property type="match status" value="1"/>
</dbReference>
<dbReference type="PANTHER" id="PTHR30545:SF2">
    <property type="entry name" value="SUGAR FERMENTATION STIMULATION PROTEIN A"/>
    <property type="match status" value="1"/>
</dbReference>
<dbReference type="Pfam" id="PF03749">
    <property type="entry name" value="SfsA"/>
    <property type="match status" value="1"/>
</dbReference>
<dbReference type="Pfam" id="PF17746">
    <property type="entry name" value="SfsA_N"/>
    <property type="match status" value="1"/>
</dbReference>
<organism>
    <name type="scientific">Sulfolobus acidocaldarius (strain ATCC 33909 / DSM 639 / JCM 8929 / NBRC 15157 / NCIMB 11770)</name>
    <dbReference type="NCBI Taxonomy" id="330779"/>
    <lineage>
        <taxon>Archaea</taxon>
        <taxon>Thermoproteota</taxon>
        <taxon>Thermoprotei</taxon>
        <taxon>Sulfolobales</taxon>
        <taxon>Sulfolobaceae</taxon>
        <taxon>Sulfolobus</taxon>
    </lineage>
</organism>
<keyword id="KW-1185">Reference proteome</keyword>
<name>SFSA_SULAC</name>
<sequence length="225" mass="25946">MTTSSFVVYDFDTPLFEDIVKERINRFVVITQSGKLCHLHDPGRLKELIYPGNRILIREHKGRKTNYMVLAAHSGTGWVVTDSSIHNKIARNFLPSDVKSEVKVNNSRLDFYYDNTFVEVKGCSLVVDGKALFPDAPTERGKRHLEELIKLKMQGYRSLILILVMRDDAICFSPNWKTDKKFSMAFKNAVEEGVEVTIKLLKLIDNKIWYIKDIQLCPDAFNYSH</sequence>
<comment type="similarity">
    <text evidence="1">Belongs to the SfsA family.</text>
</comment>
<comment type="sequence caution" evidence="2">
    <conflict type="erroneous initiation">
        <sequence resource="EMBL-CDS" id="AAY79796"/>
    </conflict>
</comment>
<protein>
    <recommendedName>
        <fullName evidence="1">Sugar fermentation stimulation protein homolog</fullName>
    </recommendedName>
</protein>